<feature type="chain" id="PRO_0000138375" description="Excinuclease cho">
    <location>
        <begin position="1"/>
        <end position="295"/>
    </location>
</feature>
<feature type="domain" description="GIY-YIG" evidence="2">
    <location>
        <begin position="33"/>
        <end position="108"/>
    </location>
</feature>
<name>CHO_SHIFL</name>
<comment type="function">
    <text evidence="1">Incises the DNA at the 3' side of a lesion during nucleotide excision repair. Incises the DNA farther away from the lesion than UvrC. Not able to incise the 5' site of a lesion. When a lesion remains because UvrC is not able to induce the 3' incision, Cho incises the DNA. Then UvrC makes the 5' incision. The combined action of Cho and UvrC broadens the substrate range of nucleotide excision repair (By similarity).</text>
</comment>
<gene>
    <name type="primary">cho</name>
    <name type="ordered locus">SF1485</name>
    <name type="ordered locus">S1602</name>
</gene>
<evidence type="ECO:0000250" key="1"/>
<evidence type="ECO:0000255" key="2">
    <source>
        <dbReference type="PROSITE-ProRule" id="PRU00977"/>
    </source>
</evidence>
<organism>
    <name type="scientific">Shigella flexneri</name>
    <dbReference type="NCBI Taxonomy" id="623"/>
    <lineage>
        <taxon>Bacteria</taxon>
        <taxon>Pseudomonadati</taxon>
        <taxon>Pseudomonadota</taxon>
        <taxon>Gammaproteobacteria</taxon>
        <taxon>Enterobacterales</taxon>
        <taxon>Enterobacteriaceae</taxon>
        <taxon>Shigella</taxon>
    </lineage>
</organism>
<dbReference type="EC" id="3.1.25.-"/>
<dbReference type="EMBL" id="AE005674">
    <property type="protein sequence ID" value="AAN43077.2"/>
    <property type="molecule type" value="Genomic_DNA"/>
</dbReference>
<dbReference type="EMBL" id="AE014073">
    <property type="protein sequence ID" value="AAP16970.1"/>
    <property type="molecule type" value="Genomic_DNA"/>
</dbReference>
<dbReference type="RefSeq" id="NP_707370.2">
    <property type="nucleotide sequence ID" value="NC_004337.2"/>
</dbReference>
<dbReference type="RefSeq" id="WP_000252351.1">
    <property type="nucleotide sequence ID" value="NZ_WPGW01000081.1"/>
</dbReference>
<dbReference type="SMR" id="P59361"/>
<dbReference type="STRING" id="198214.SF1485"/>
<dbReference type="PaxDb" id="198214-SF1485"/>
<dbReference type="GeneID" id="1024688"/>
<dbReference type="KEGG" id="sfl:SF1485"/>
<dbReference type="KEGG" id="sfx:S1602"/>
<dbReference type="PATRIC" id="fig|198214.7.peg.1753"/>
<dbReference type="HOGENOM" id="CLU_054721_1_0_6"/>
<dbReference type="Proteomes" id="UP000001006">
    <property type="component" value="Chromosome"/>
</dbReference>
<dbReference type="Proteomes" id="UP000002673">
    <property type="component" value="Chromosome"/>
</dbReference>
<dbReference type="GO" id="GO:0009380">
    <property type="term" value="C:excinuclease repair complex"/>
    <property type="evidence" value="ECO:0007669"/>
    <property type="project" value="TreeGrafter"/>
</dbReference>
<dbReference type="GO" id="GO:0004518">
    <property type="term" value="F:nuclease activity"/>
    <property type="evidence" value="ECO:0007669"/>
    <property type="project" value="UniProtKB-KW"/>
</dbReference>
<dbReference type="GO" id="GO:0006289">
    <property type="term" value="P:nucleotide-excision repair"/>
    <property type="evidence" value="ECO:0007669"/>
    <property type="project" value="InterPro"/>
</dbReference>
<dbReference type="GO" id="GO:0009432">
    <property type="term" value="P:SOS response"/>
    <property type="evidence" value="ECO:0007669"/>
    <property type="project" value="UniProtKB-KW"/>
</dbReference>
<dbReference type="CDD" id="cd10434">
    <property type="entry name" value="GIY-YIG_UvrC_Cho"/>
    <property type="match status" value="1"/>
</dbReference>
<dbReference type="FunFam" id="3.40.1440.10:FF:000004">
    <property type="entry name" value="UV-repair endonuclease Cho"/>
    <property type="match status" value="1"/>
</dbReference>
<dbReference type="Gene3D" id="3.40.1440.10">
    <property type="entry name" value="GIY-YIG endonuclease"/>
    <property type="match status" value="1"/>
</dbReference>
<dbReference type="InterPro" id="IPR000305">
    <property type="entry name" value="GIY-YIG_endonuc"/>
</dbReference>
<dbReference type="InterPro" id="IPR035901">
    <property type="entry name" value="GIY-YIG_endonuc_sf"/>
</dbReference>
<dbReference type="InterPro" id="IPR047296">
    <property type="entry name" value="GIY-YIG_UvrC_Cho"/>
</dbReference>
<dbReference type="InterPro" id="IPR050066">
    <property type="entry name" value="UvrABC_protein_C"/>
</dbReference>
<dbReference type="NCBIfam" id="NF007833">
    <property type="entry name" value="PRK10545.1"/>
    <property type="match status" value="1"/>
</dbReference>
<dbReference type="PANTHER" id="PTHR30562:SF10">
    <property type="entry name" value="EXCINUCLEASE CHO"/>
    <property type="match status" value="1"/>
</dbReference>
<dbReference type="PANTHER" id="PTHR30562">
    <property type="entry name" value="UVRC/OXIDOREDUCTASE"/>
    <property type="match status" value="1"/>
</dbReference>
<dbReference type="SMART" id="SM00465">
    <property type="entry name" value="GIYc"/>
    <property type="match status" value="1"/>
</dbReference>
<dbReference type="SUPFAM" id="SSF82771">
    <property type="entry name" value="GIY-YIG endonuclease"/>
    <property type="match status" value="1"/>
</dbReference>
<dbReference type="PROSITE" id="PS50164">
    <property type="entry name" value="GIY_YIG"/>
    <property type="match status" value="1"/>
</dbReference>
<reference key="1">
    <citation type="journal article" date="2002" name="Nucleic Acids Res.">
        <title>Genome sequence of Shigella flexneri 2a: insights into pathogenicity through comparison with genomes of Escherichia coli K12 and O157.</title>
        <authorList>
            <person name="Jin Q."/>
            <person name="Yuan Z."/>
            <person name="Xu J."/>
            <person name="Wang Y."/>
            <person name="Shen Y."/>
            <person name="Lu W."/>
            <person name="Wang J."/>
            <person name="Liu H."/>
            <person name="Yang J."/>
            <person name="Yang F."/>
            <person name="Zhang X."/>
            <person name="Zhang J."/>
            <person name="Yang G."/>
            <person name="Wu H."/>
            <person name="Qu D."/>
            <person name="Dong J."/>
            <person name="Sun L."/>
            <person name="Xue Y."/>
            <person name="Zhao A."/>
            <person name="Gao Y."/>
            <person name="Zhu J."/>
            <person name="Kan B."/>
            <person name="Ding K."/>
            <person name="Chen S."/>
            <person name="Cheng H."/>
            <person name="Yao Z."/>
            <person name="He B."/>
            <person name="Chen R."/>
            <person name="Ma D."/>
            <person name="Qiang B."/>
            <person name="Wen Y."/>
            <person name="Hou Y."/>
            <person name="Yu J."/>
        </authorList>
    </citation>
    <scope>NUCLEOTIDE SEQUENCE [LARGE SCALE GENOMIC DNA]</scope>
    <source>
        <strain>301 / Serotype 2a</strain>
    </source>
</reference>
<reference key="2">
    <citation type="journal article" date="2003" name="Infect. Immun.">
        <title>Complete genome sequence and comparative genomics of Shigella flexneri serotype 2a strain 2457T.</title>
        <authorList>
            <person name="Wei J."/>
            <person name="Goldberg M.B."/>
            <person name="Burland V."/>
            <person name="Venkatesan M.M."/>
            <person name="Deng W."/>
            <person name="Fournier G."/>
            <person name="Mayhew G.F."/>
            <person name="Plunkett G. III"/>
            <person name="Rose D.J."/>
            <person name="Darling A."/>
            <person name="Mau B."/>
            <person name="Perna N.T."/>
            <person name="Payne S.M."/>
            <person name="Runyen-Janecky L.J."/>
            <person name="Zhou S."/>
            <person name="Schwartz D.C."/>
            <person name="Blattner F.R."/>
        </authorList>
    </citation>
    <scope>NUCLEOTIDE SEQUENCE [LARGE SCALE GENOMIC DNA]</scope>
    <source>
        <strain>ATCC 700930 / 2457T / Serotype 2a</strain>
    </source>
</reference>
<accession>P59361</accession>
<sequence>MVRRLTSPRLEFEAAAIYEYPEHLHSFLNDLPTRPGVYLFHGESDTMPLYIGKSVNIRSRVLSHLRTPDEAAMLRQSRRISWICTAGEIGALLLEARLIKEQQPLFNKRLRRNRQLCALQLNEKRVDVVYAKEVDFSRAPNLFGLFANRRAALQALQSIADEQKLCYGLLGLEPLSRGRACFRSALKRCAGACCGKESHEEHALRLRQSLERLRVVCWPWQGAVALKEQHPEMTQYHIIQNWLWLGAVNSLEEATTLIRTPAGFDHDGYKILCKPLLSGNYEITELDPANDQRAS</sequence>
<protein>
    <recommendedName>
        <fullName>Excinuclease cho</fullName>
        <ecNumber>3.1.25.-</ecNumber>
    </recommendedName>
    <alternativeName>
        <fullName>Endonuclease cho</fullName>
    </alternativeName>
    <alternativeName>
        <fullName>UvrC homolog protein</fullName>
    </alternativeName>
</protein>
<proteinExistence type="inferred from homology"/>
<keyword id="KW-0227">DNA damage</keyword>
<keyword id="KW-0228">DNA excision</keyword>
<keyword id="KW-0234">DNA repair</keyword>
<keyword id="KW-0267">Excision nuclease</keyword>
<keyword id="KW-0378">Hydrolase</keyword>
<keyword id="KW-1185">Reference proteome</keyword>
<keyword id="KW-0742">SOS response</keyword>